<comment type="function">
    <text evidence="1">Catalyzes the 2'-O-methylation at nucleotide C2498 in 23S rRNA.</text>
</comment>
<comment type="catalytic activity">
    <reaction evidence="1">
        <text>cytidine(2498) in 23S rRNA + S-adenosyl-L-methionine = 2'-O-methylcytidine(2498) in 23S rRNA + S-adenosyl-L-homocysteine + H(+)</text>
        <dbReference type="Rhea" id="RHEA:42788"/>
        <dbReference type="Rhea" id="RHEA-COMP:10244"/>
        <dbReference type="Rhea" id="RHEA-COMP:10245"/>
        <dbReference type="ChEBI" id="CHEBI:15378"/>
        <dbReference type="ChEBI" id="CHEBI:57856"/>
        <dbReference type="ChEBI" id="CHEBI:59789"/>
        <dbReference type="ChEBI" id="CHEBI:74495"/>
        <dbReference type="ChEBI" id="CHEBI:82748"/>
        <dbReference type="EC" id="2.1.1.186"/>
    </reaction>
</comment>
<comment type="subunit">
    <text evidence="1">Monomer.</text>
</comment>
<comment type="subcellular location">
    <subcellularLocation>
        <location evidence="1">Cytoplasm</location>
    </subcellularLocation>
</comment>
<comment type="similarity">
    <text evidence="1">Belongs to the class I-like SAM-binding methyltransferase superfamily. RNA methyltransferase RlmE family. RlmM subfamily.</text>
</comment>
<evidence type="ECO:0000255" key="1">
    <source>
        <dbReference type="HAMAP-Rule" id="MF_01551"/>
    </source>
</evidence>
<protein>
    <recommendedName>
        <fullName evidence="1">Ribosomal RNA large subunit methyltransferase M</fullName>
        <ecNumber evidence="1">2.1.1.186</ecNumber>
    </recommendedName>
    <alternativeName>
        <fullName evidence="1">23S rRNA (cytidine2498-2'-O)-methyltransferase</fullName>
    </alternativeName>
    <alternativeName>
        <fullName evidence="1">23S rRNA 2'-O-ribose methyltransferase RlmM</fullName>
    </alternativeName>
</protein>
<accession>C4L9Y9</accession>
<dbReference type="EC" id="2.1.1.186" evidence="1"/>
<dbReference type="EMBL" id="CP001616">
    <property type="protein sequence ID" value="ACQ92118.1"/>
    <property type="molecule type" value="Genomic_DNA"/>
</dbReference>
<dbReference type="RefSeq" id="WP_012728717.1">
    <property type="nucleotide sequence ID" value="NC_012691.1"/>
</dbReference>
<dbReference type="SMR" id="C4L9Y9"/>
<dbReference type="STRING" id="595494.Tola_0489"/>
<dbReference type="KEGG" id="tau:Tola_0489"/>
<dbReference type="eggNOG" id="COG2933">
    <property type="taxonomic scope" value="Bacteria"/>
</dbReference>
<dbReference type="HOGENOM" id="CLU_043780_0_0_6"/>
<dbReference type="OrthoDB" id="154490at2"/>
<dbReference type="Proteomes" id="UP000009073">
    <property type="component" value="Chromosome"/>
</dbReference>
<dbReference type="GO" id="GO:0005737">
    <property type="term" value="C:cytoplasm"/>
    <property type="evidence" value="ECO:0007669"/>
    <property type="project" value="UniProtKB-SubCell"/>
</dbReference>
<dbReference type="GO" id="GO:0008757">
    <property type="term" value="F:S-adenosylmethionine-dependent methyltransferase activity"/>
    <property type="evidence" value="ECO:0007669"/>
    <property type="project" value="UniProtKB-UniRule"/>
</dbReference>
<dbReference type="GO" id="GO:0032259">
    <property type="term" value="P:methylation"/>
    <property type="evidence" value="ECO:0007669"/>
    <property type="project" value="UniProtKB-KW"/>
</dbReference>
<dbReference type="GO" id="GO:0006364">
    <property type="term" value="P:rRNA processing"/>
    <property type="evidence" value="ECO:0007669"/>
    <property type="project" value="UniProtKB-UniRule"/>
</dbReference>
<dbReference type="Gene3D" id="3.30.2300.20">
    <property type="match status" value="1"/>
</dbReference>
<dbReference type="Gene3D" id="3.30.70.2810">
    <property type="match status" value="1"/>
</dbReference>
<dbReference type="Gene3D" id="3.40.50.150">
    <property type="entry name" value="Vaccinia Virus protein VP39"/>
    <property type="match status" value="1"/>
</dbReference>
<dbReference type="HAMAP" id="MF_01551">
    <property type="entry name" value="23SrRNA_methyltr_M"/>
    <property type="match status" value="1"/>
</dbReference>
<dbReference type="InterPro" id="IPR040739">
    <property type="entry name" value="RlmM_FDX"/>
</dbReference>
<dbReference type="InterPro" id="IPR048646">
    <property type="entry name" value="RlmM_THUMP-like"/>
</dbReference>
<dbReference type="InterPro" id="IPR002877">
    <property type="entry name" value="RNA_MeTrfase_FtsJ_dom"/>
</dbReference>
<dbReference type="InterPro" id="IPR011224">
    <property type="entry name" value="rRNA_MeTrfase_M"/>
</dbReference>
<dbReference type="InterPro" id="IPR029063">
    <property type="entry name" value="SAM-dependent_MTases_sf"/>
</dbReference>
<dbReference type="NCBIfam" id="NF008734">
    <property type="entry name" value="PRK11760.1"/>
    <property type="match status" value="1"/>
</dbReference>
<dbReference type="PANTHER" id="PTHR37524">
    <property type="entry name" value="RIBOSOMAL RNA LARGE SUBUNIT METHYLTRANSFERASE M"/>
    <property type="match status" value="1"/>
</dbReference>
<dbReference type="PANTHER" id="PTHR37524:SF2">
    <property type="entry name" value="RIBOSOMAL RNA METHYLTRANSFERASE FTSJ DOMAIN-CONTAINING PROTEIN"/>
    <property type="match status" value="1"/>
</dbReference>
<dbReference type="Pfam" id="PF01728">
    <property type="entry name" value="FtsJ"/>
    <property type="match status" value="1"/>
</dbReference>
<dbReference type="Pfam" id="PF18125">
    <property type="entry name" value="RlmM_FDX"/>
    <property type="match status" value="1"/>
</dbReference>
<dbReference type="Pfam" id="PF21239">
    <property type="entry name" value="RLMM_N"/>
    <property type="match status" value="1"/>
</dbReference>
<dbReference type="PIRSF" id="PIRSF028774">
    <property type="entry name" value="UCP028774"/>
    <property type="match status" value="1"/>
</dbReference>
<dbReference type="SUPFAM" id="SSF53335">
    <property type="entry name" value="S-adenosyl-L-methionine-dependent methyltransferases"/>
    <property type="match status" value="1"/>
</dbReference>
<feature type="chain" id="PRO_1000215472" description="Ribosomal RNA large subunit methyltransferase M">
    <location>
        <begin position="1"/>
        <end position="366"/>
    </location>
</feature>
<feature type="active site" description="Proton acceptor" evidence="1">
    <location>
        <position position="305"/>
    </location>
</feature>
<feature type="binding site" evidence="1">
    <location>
        <position position="187"/>
    </location>
    <ligand>
        <name>S-adenosyl-L-methionine</name>
        <dbReference type="ChEBI" id="CHEBI:59789"/>
    </ligand>
</feature>
<feature type="binding site" evidence="1">
    <location>
        <begin position="220"/>
        <end position="223"/>
    </location>
    <ligand>
        <name>S-adenosyl-L-methionine</name>
        <dbReference type="ChEBI" id="CHEBI:59789"/>
    </ligand>
</feature>
<feature type="binding site" evidence="1">
    <location>
        <position position="239"/>
    </location>
    <ligand>
        <name>S-adenosyl-L-methionine</name>
        <dbReference type="ChEBI" id="CHEBI:59789"/>
    </ligand>
</feature>
<feature type="binding site" evidence="1">
    <location>
        <position position="259"/>
    </location>
    <ligand>
        <name>S-adenosyl-L-methionine</name>
        <dbReference type="ChEBI" id="CHEBI:59789"/>
    </ligand>
</feature>
<feature type="binding site" evidence="1">
    <location>
        <position position="276"/>
    </location>
    <ligand>
        <name>S-adenosyl-L-methionine</name>
        <dbReference type="ChEBI" id="CHEBI:59789"/>
    </ligand>
</feature>
<keyword id="KW-0963">Cytoplasm</keyword>
<keyword id="KW-0489">Methyltransferase</keyword>
<keyword id="KW-1185">Reference proteome</keyword>
<keyword id="KW-0698">rRNA processing</keyword>
<keyword id="KW-0949">S-adenosyl-L-methionine</keyword>
<keyword id="KW-0808">Transferase</keyword>
<proteinExistence type="inferred from homology"/>
<organism>
    <name type="scientific">Tolumonas auensis (strain DSM 9187 / NBRC 110442 / TA 4)</name>
    <dbReference type="NCBI Taxonomy" id="595494"/>
    <lineage>
        <taxon>Bacteria</taxon>
        <taxon>Pseudomonadati</taxon>
        <taxon>Pseudomonadota</taxon>
        <taxon>Gammaproteobacteria</taxon>
        <taxon>Aeromonadales</taxon>
        <taxon>Aeromonadaceae</taxon>
        <taxon>Tolumonas</taxon>
    </lineage>
</organism>
<reference key="1">
    <citation type="submission" date="2009-05" db="EMBL/GenBank/DDBJ databases">
        <title>Complete sequence of Tolumonas auensis DSM 9187.</title>
        <authorList>
            <consortium name="US DOE Joint Genome Institute"/>
            <person name="Lucas S."/>
            <person name="Copeland A."/>
            <person name="Lapidus A."/>
            <person name="Glavina del Rio T."/>
            <person name="Tice H."/>
            <person name="Bruce D."/>
            <person name="Goodwin L."/>
            <person name="Pitluck S."/>
            <person name="Chertkov O."/>
            <person name="Brettin T."/>
            <person name="Detter J.C."/>
            <person name="Han C."/>
            <person name="Larimer F."/>
            <person name="Land M."/>
            <person name="Hauser L."/>
            <person name="Kyrpides N."/>
            <person name="Mikhailova N."/>
            <person name="Spring S."/>
            <person name="Beller H."/>
        </authorList>
    </citation>
    <scope>NUCLEOTIDE SEQUENCE [LARGE SCALE GENOMIC DNA]</scope>
    <source>
        <strain>DSM 9187 / NBRC 110442 / TA 4</strain>
    </source>
</reference>
<gene>
    <name evidence="1" type="primary">rlmM</name>
    <name type="ordered locus">Tola_0489</name>
</gene>
<name>RLMM_TOLAT</name>
<sequence length="366" mass="42146">MNHLMFYCRPGFEKDMAAEIQDKAVALECFGFSRVADNCGFVLFECYGEQDAERLARRLPFRELIFARQMLVVIEQLNGLDLKDRITPIVEAVQKMPQFGELRVETADTNEAKELSTFCRKFSVPLRQALRAAGKLTPDVDPRRPVLHLFFLKNDSVWIGYSYPNNNSPFHMGIPRLRFPSDAPSRSTLKLEEAFYMFIPPEDDEIRLCSGLTAVDLGASPGGWTYQLVRRGMMVSAIDNGPMAESLMESGQVKHIMADGFTYRPTKKNPYWLVCDMVEKPARITHLIAQWFREGCCQEAIFNLKLPMKKRYAEVEHNLAVLKEWLAEIDGEYVIQAKQLYHDREEITVHVYDERKLARRRSGAFN</sequence>